<organism>
    <name type="scientific">Bacillus licheniformis (strain ATCC 14580 / DSM 13 / JCM 2505 / CCUG 7422 / NBRC 12200 / NCIMB 9375 / NCTC 10341 / NRRL NRS-1264 / Gibson 46)</name>
    <dbReference type="NCBI Taxonomy" id="279010"/>
    <lineage>
        <taxon>Bacteria</taxon>
        <taxon>Bacillati</taxon>
        <taxon>Bacillota</taxon>
        <taxon>Bacilli</taxon>
        <taxon>Bacillales</taxon>
        <taxon>Bacillaceae</taxon>
        <taxon>Bacillus</taxon>
    </lineage>
</organism>
<sequence length="432" mass="46537">MQHTQSEKLHEEALQHIVGGVNSPSRSYKAVGGGSPVAMERGSGAYFWDVDGNKYIDYLAAYGPIITGHAHPHITKAIQTAAENGVLYGTPTKHEVTFAKMLKEAIPALDKVRFVNSGTEAVMTTIRVARAYTGRTKIIKFAGCYHGHSDLVLVAAGSGPSTLGTPDSAGVPKSIANEVITVPFNDIDSYKEALDKWGNDIAAVLVEPIVGNFGIVEPKSGFLEQVNELTHNAGALVIYDEVITAFRFMYGGAQDLLGVKPDLTALGKIIGGGLPIGAYGGRKEIMEQVAPLGPAYQAGTMAGNPASILSGIACLEVLKEKGTYEKLDRLGAMLEEGILAHAETHGIDITVNRLKGALTVYFTNEKVENYEQAENTDGDMFAAFFKLMLERGINLAPSKYEAWFITTAHTEEDIKDTLKAVDDSFKQLKQRM</sequence>
<keyword id="KW-0963">Cytoplasm</keyword>
<keyword id="KW-0413">Isomerase</keyword>
<keyword id="KW-0627">Porphyrin biosynthesis</keyword>
<keyword id="KW-0663">Pyridoxal phosphate</keyword>
<keyword id="KW-1185">Reference proteome</keyword>
<evidence type="ECO:0000255" key="1">
    <source>
        <dbReference type="HAMAP-Rule" id="MF_00375"/>
    </source>
</evidence>
<dbReference type="EC" id="5.4.3.8" evidence="1"/>
<dbReference type="EMBL" id="AE017333">
    <property type="protein sequence ID" value="AAU39832.1"/>
    <property type="molecule type" value="Genomic_DNA"/>
</dbReference>
<dbReference type="EMBL" id="CP000002">
    <property type="protein sequence ID" value="AAU22484.1"/>
    <property type="molecule type" value="Genomic_DNA"/>
</dbReference>
<dbReference type="RefSeq" id="WP_003179959.1">
    <property type="nucleotide sequence ID" value="NC_006322.1"/>
</dbReference>
<dbReference type="SMR" id="Q65M82"/>
<dbReference type="STRING" id="279010.BL03060"/>
<dbReference type="KEGG" id="bld:BLi00898"/>
<dbReference type="KEGG" id="bli:BL03060"/>
<dbReference type="eggNOG" id="COG0001">
    <property type="taxonomic scope" value="Bacteria"/>
</dbReference>
<dbReference type="HOGENOM" id="CLU_016922_1_5_9"/>
<dbReference type="UniPathway" id="UPA00251">
    <property type="reaction ID" value="UER00317"/>
</dbReference>
<dbReference type="Proteomes" id="UP000000606">
    <property type="component" value="Chromosome"/>
</dbReference>
<dbReference type="GO" id="GO:0005737">
    <property type="term" value="C:cytoplasm"/>
    <property type="evidence" value="ECO:0007669"/>
    <property type="project" value="UniProtKB-SubCell"/>
</dbReference>
<dbReference type="GO" id="GO:0042286">
    <property type="term" value="F:glutamate-1-semialdehyde 2,1-aminomutase activity"/>
    <property type="evidence" value="ECO:0007669"/>
    <property type="project" value="UniProtKB-UniRule"/>
</dbReference>
<dbReference type="GO" id="GO:0030170">
    <property type="term" value="F:pyridoxal phosphate binding"/>
    <property type="evidence" value="ECO:0007669"/>
    <property type="project" value="InterPro"/>
</dbReference>
<dbReference type="GO" id="GO:0008483">
    <property type="term" value="F:transaminase activity"/>
    <property type="evidence" value="ECO:0007669"/>
    <property type="project" value="InterPro"/>
</dbReference>
<dbReference type="GO" id="GO:0006782">
    <property type="term" value="P:protoporphyrinogen IX biosynthetic process"/>
    <property type="evidence" value="ECO:0007669"/>
    <property type="project" value="UniProtKB-UniRule"/>
</dbReference>
<dbReference type="CDD" id="cd00610">
    <property type="entry name" value="OAT_like"/>
    <property type="match status" value="1"/>
</dbReference>
<dbReference type="FunFam" id="3.40.640.10:FF:000021">
    <property type="entry name" value="Glutamate-1-semialdehyde 2,1-aminomutase"/>
    <property type="match status" value="1"/>
</dbReference>
<dbReference type="Gene3D" id="3.90.1150.10">
    <property type="entry name" value="Aspartate Aminotransferase, domain 1"/>
    <property type="match status" value="1"/>
</dbReference>
<dbReference type="Gene3D" id="3.40.640.10">
    <property type="entry name" value="Type I PLP-dependent aspartate aminotransferase-like (Major domain)"/>
    <property type="match status" value="1"/>
</dbReference>
<dbReference type="HAMAP" id="MF_00375">
    <property type="entry name" value="HemL_aminotrans_3"/>
    <property type="match status" value="1"/>
</dbReference>
<dbReference type="InterPro" id="IPR004639">
    <property type="entry name" value="4pyrrol_synth_GluAld_NH2Trfase"/>
</dbReference>
<dbReference type="InterPro" id="IPR005814">
    <property type="entry name" value="Aminotrans_3"/>
</dbReference>
<dbReference type="InterPro" id="IPR049704">
    <property type="entry name" value="Aminotrans_3_PPA_site"/>
</dbReference>
<dbReference type="InterPro" id="IPR015424">
    <property type="entry name" value="PyrdxlP-dep_Trfase"/>
</dbReference>
<dbReference type="InterPro" id="IPR015421">
    <property type="entry name" value="PyrdxlP-dep_Trfase_major"/>
</dbReference>
<dbReference type="InterPro" id="IPR015422">
    <property type="entry name" value="PyrdxlP-dep_Trfase_small"/>
</dbReference>
<dbReference type="NCBIfam" id="TIGR00713">
    <property type="entry name" value="hemL"/>
    <property type="match status" value="1"/>
</dbReference>
<dbReference type="NCBIfam" id="NF000818">
    <property type="entry name" value="PRK00062.1"/>
    <property type="match status" value="1"/>
</dbReference>
<dbReference type="NCBIfam" id="NF009055">
    <property type="entry name" value="PRK12389.1"/>
    <property type="match status" value="1"/>
</dbReference>
<dbReference type="PANTHER" id="PTHR43713">
    <property type="entry name" value="GLUTAMATE-1-SEMIALDEHYDE 2,1-AMINOMUTASE"/>
    <property type="match status" value="1"/>
</dbReference>
<dbReference type="PANTHER" id="PTHR43713:SF1">
    <property type="entry name" value="GLUTAMATE-1-SEMIALDEHYDE 2,1-AMINOMUTASE 2"/>
    <property type="match status" value="1"/>
</dbReference>
<dbReference type="Pfam" id="PF00202">
    <property type="entry name" value="Aminotran_3"/>
    <property type="match status" value="1"/>
</dbReference>
<dbReference type="SUPFAM" id="SSF53383">
    <property type="entry name" value="PLP-dependent transferases"/>
    <property type="match status" value="1"/>
</dbReference>
<dbReference type="PROSITE" id="PS00600">
    <property type="entry name" value="AA_TRANSFER_CLASS_3"/>
    <property type="match status" value="1"/>
</dbReference>
<name>GSA1_BACLD</name>
<reference key="1">
    <citation type="journal article" date="2004" name="J. Mol. Microbiol. Biotechnol.">
        <title>The complete genome sequence of Bacillus licheniformis DSM13, an organism with great industrial potential.</title>
        <authorList>
            <person name="Veith B."/>
            <person name="Herzberg C."/>
            <person name="Steckel S."/>
            <person name="Feesche J."/>
            <person name="Maurer K.H."/>
            <person name="Ehrenreich P."/>
            <person name="Baeumer S."/>
            <person name="Henne A."/>
            <person name="Liesegang H."/>
            <person name="Merkl R."/>
            <person name="Ehrenreich A."/>
            <person name="Gottschalk G."/>
        </authorList>
    </citation>
    <scope>NUCLEOTIDE SEQUENCE [LARGE SCALE GENOMIC DNA]</scope>
    <source>
        <strain>ATCC 14580 / DSM 13 / JCM 2505 / CCUG 7422 / NBRC 12200 / NCIMB 9375 / NCTC 10341 / NRRL NRS-1264 / Gibson 46</strain>
    </source>
</reference>
<reference key="2">
    <citation type="journal article" date="2004" name="Genome Biol.">
        <title>Complete genome sequence of the industrial bacterium Bacillus licheniformis and comparisons with closely related Bacillus species.</title>
        <authorList>
            <person name="Rey M.W."/>
            <person name="Ramaiya P."/>
            <person name="Nelson B.A."/>
            <person name="Brody-Karpin S.D."/>
            <person name="Zaretsky E.J."/>
            <person name="Tang M."/>
            <person name="Lopez de Leon A."/>
            <person name="Xiang H."/>
            <person name="Gusti V."/>
            <person name="Clausen I.G."/>
            <person name="Olsen P.B."/>
            <person name="Rasmussen M.D."/>
            <person name="Andersen J.T."/>
            <person name="Joergensen P.L."/>
            <person name="Larsen T.S."/>
            <person name="Sorokin A."/>
            <person name="Bolotin A."/>
            <person name="Lapidus A."/>
            <person name="Galleron N."/>
            <person name="Ehrlich S.D."/>
            <person name="Berka R.M."/>
        </authorList>
    </citation>
    <scope>NUCLEOTIDE SEQUENCE [LARGE SCALE GENOMIC DNA]</scope>
    <source>
        <strain>ATCC 14580 / DSM 13 / JCM 2505 / CCUG 7422 / NBRC 12200 / NCIMB 9375 / NCTC 10341 / NRRL NRS-1264 / Gibson 46</strain>
    </source>
</reference>
<accession>Q65M82</accession>
<accession>Q62XM4</accession>
<proteinExistence type="inferred from homology"/>
<comment type="catalytic activity">
    <reaction evidence="1">
        <text>(S)-4-amino-5-oxopentanoate = 5-aminolevulinate</text>
        <dbReference type="Rhea" id="RHEA:14265"/>
        <dbReference type="ChEBI" id="CHEBI:57501"/>
        <dbReference type="ChEBI" id="CHEBI:356416"/>
        <dbReference type="EC" id="5.4.3.8"/>
    </reaction>
</comment>
<comment type="cofactor">
    <cofactor evidence="1">
        <name>pyridoxal 5'-phosphate</name>
        <dbReference type="ChEBI" id="CHEBI:597326"/>
    </cofactor>
</comment>
<comment type="pathway">
    <text evidence="1">Porphyrin-containing compound metabolism; protoporphyrin-IX biosynthesis; 5-aminolevulinate from L-glutamyl-tRNA(Glu): step 2/2.</text>
</comment>
<comment type="subunit">
    <text evidence="1">Homodimer.</text>
</comment>
<comment type="subcellular location">
    <subcellularLocation>
        <location evidence="1">Cytoplasm</location>
    </subcellularLocation>
</comment>
<comment type="similarity">
    <text evidence="1">Belongs to the class-III pyridoxal-phosphate-dependent aminotransferase family. HemL subfamily.</text>
</comment>
<feature type="chain" id="PRO_0000243546" description="Glutamate-1-semialdehyde 2,1-aminomutase 1">
    <location>
        <begin position="1"/>
        <end position="432"/>
    </location>
</feature>
<feature type="modified residue" description="N6-(pyridoxal phosphate)lysine" evidence="1">
    <location>
        <position position="268"/>
    </location>
</feature>
<gene>
    <name evidence="1" type="primary">hemL1</name>
    <name type="ordered locus">BLi00898</name>
    <name type="ordered locus">BL03060</name>
</gene>
<protein>
    <recommendedName>
        <fullName evidence="1">Glutamate-1-semialdehyde 2,1-aminomutase 1</fullName>
        <shortName evidence="1">GSA 1</shortName>
        <ecNumber evidence="1">5.4.3.8</ecNumber>
    </recommendedName>
    <alternativeName>
        <fullName evidence="1">Glutamate-1-semialdehyde aminotransferase 1</fullName>
        <shortName evidence="1">GSA-AT 1</shortName>
    </alternativeName>
</protein>